<proteinExistence type="inferred from homology"/>
<protein>
    <recommendedName>
        <fullName evidence="1">DNA-directed RNA polymerase subunit beta</fullName>
        <shortName evidence="1">RNAP subunit beta</shortName>
        <ecNumber evidence="1">2.7.7.6</ecNumber>
    </recommendedName>
    <alternativeName>
        <fullName evidence="1">RNA polymerase subunit beta</fullName>
    </alternativeName>
    <alternativeName>
        <fullName evidence="1">Transcriptase subunit beta</fullName>
    </alternativeName>
</protein>
<gene>
    <name evidence="1" type="primary">rpoB</name>
    <name type="ordered locus">MYPE790</name>
</gene>
<sequence>MSKKKFIDKEISKYVLRRDYSKIEKNFNEPNLLNLQKNAFHKFIDTELEGTIKSIFPIKSIGGRYSLEYIGMKLEKPKRSEKEARNEGKTYDRPLYVDLAIVDNESGEVKKTTKSSKNKASNTDGIFFASIPMITEKGTFIVNGIEKFVISQIVRSPGAYILTKSQIKLSNSRKRIQEGYICEILPAKGTLFFIFMAENKDFIQVMFRDAIGESTHTIPITAFLKALGLNKEEILNIFANHKSIKNSLDNEIYNEKDVFETDELINLRKNLNSSDSNRSYGVDTKLRELFKKYSSLKSQLEAEGKNAEKQKELNEVINNIISEKAAKDLVINLSISTKNIDSKFRLSNKETTYQSIIYNHFFSNKSFDLSKAGRFKMARKMRLSERLYQRVLAEDLKDINGKVVIKKNTLIQKHELDTIKQLTKEGKLGIVHNVNLDERISKMANVVKYEKINVYQDNDSQDEFIPIIGTDTSLDKPTLSISDILSITSYVINLDYDIGFYDDIDHLGNKRLKLIDELLKTRAQAGLVRIEKFINDKLAIADGANKSQEQSEEQEPKKSLTVKSIINTKPFQISFKEFFNSHQLTQFLDQQNPLAELTNKRRISAMGPGGISREDPNLDIRDVHYSHYGKICPIETPEGMNIGLIMSLATYASTDENGFLITPYRIVKNGVITDEIRWLTALSEDEYIIACSNLNVEKNKFKEDKVLCRYRSSWEFFDVKDVDFIDISPKQVVSIAASSIPFLENDDANRALMGANMQRQATPLISPIAPIVGTGNEYKIAHDSGMAAVYDGEKDGTVSYVDGGTIKIKSGSEEKVYELTKFNKSNQNTCNNQVPIVSVGEKVTKGTTIADGPAMSNGELALGQNVLVAFTTWSGYNYEDAIILSKRLFMEDIFTSIHIVEYSVDCLKTKNGDEEITRDIPNVSESSKKYLDDEGIIMVGAEVKEGDVLVGKISPKGQVELTSEEKLLQAIFGDKSKNHKETSLKVPHGGEGTVAMVKRFKVEDDYELNADVIEQIKVYVVQKRKIQIGDKMAGRHGNKGIISKIVPVEDMPHLEDGTTIDIMLNPLGVPSRMNIGQILELHLGLAMKKLTLSKVLELYYDKKPASDFSLWFGIHEEASRNLIKNLEKILNEKQIKSLDQANKEFTDFDLSLALSRSGISREKLIYKTATPVFEGVNRTDLKEAMTEAGIDPINGKLGEGKSGKFNLIDGRTGEYFDGEVSVGIMYMLKLDHMVDDKIHSRAVGPYSKITQQPLGGKSQNGGQRFGEMEVWALEAYGAAHNLRELLTIKSDDVKGRNNTYNAIIKGKPIPESGLPESFKLLTKQLQGLGLQVSITKELGKANNNNFKDINEYISNITNNAIKNDEDQQIIEEMDI</sequence>
<dbReference type="EC" id="2.7.7.6" evidence="1"/>
<dbReference type="EMBL" id="BA000026">
    <property type="protein sequence ID" value="BAC43869.1"/>
    <property type="molecule type" value="Genomic_DNA"/>
</dbReference>
<dbReference type="RefSeq" id="WP_011076905.1">
    <property type="nucleotide sequence ID" value="NC_004432.1"/>
</dbReference>
<dbReference type="SMR" id="Q8EWX1"/>
<dbReference type="FunCoup" id="Q8EWX1">
    <property type="interactions" value="236"/>
</dbReference>
<dbReference type="STRING" id="272633.gene:10731170"/>
<dbReference type="KEGG" id="mpe:MYPE790"/>
<dbReference type="eggNOG" id="COG0085">
    <property type="taxonomic scope" value="Bacteria"/>
</dbReference>
<dbReference type="HOGENOM" id="CLU_000524_4_1_14"/>
<dbReference type="InParanoid" id="Q8EWX1"/>
<dbReference type="Proteomes" id="UP000002522">
    <property type="component" value="Chromosome"/>
</dbReference>
<dbReference type="GO" id="GO:0000428">
    <property type="term" value="C:DNA-directed RNA polymerase complex"/>
    <property type="evidence" value="ECO:0007669"/>
    <property type="project" value="UniProtKB-KW"/>
</dbReference>
<dbReference type="GO" id="GO:0003677">
    <property type="term" value="F:DNA binding"/>
    <property type="evidence" value="ECO:0007669"/>
    <property type="project" value="UniProtKB-UniRule"/>
</dbReference>
<dbReference type="GO" id="GO:0003899">
    <property type="term" value="F:DNA-directed RNA polymerase activity"/>
    <property type="evidence" value="ECO:0007669"/>
    <property type="project" value="UniProtKB-UniRule"/>
</dbReference>
<dbReference type="GO" id="GO:0032549">
    <property type="term" value="F:ribonucleoside binding"/>
    <property type="evidence" value="ECO:0007669"/>
    <property type="project" value="InterPro"/>
</dbReference>
<dbReference type="GO" id="GO:0006351">
    <property type="term" value="P:DNA-templated transcription"/>
    <property type="evidence" value="ECO:0007669"/>
    <property type="project" value="UniProtKB-UniRule"/>
</dbReference>
<dbReference type="CDD" id="cd00653">
    <property type="entry name" value="RNA_pol_B_RPB2"/>
    <property type="match status" value="1"/>
</dbReference>
<dbReference type="Gene3D" id="2.40.50.100">
    <property type="match status" value="1"/>
</dbReference>
<dbReference type="Gene3D" id="2.40.50.150">
    <property type="match status" value="1"/>
</dbReference>
<dbReference type="Gene3D" id="3.90.1100.10">
    <property type="match status" value="2"/>
</dbReference>
<dbReference type="Gene3D" id="2.30.150.10">
    <property type="entry name" value="DNA-directed RNA polymerase, beta subunit, external 1 domain"/>
    <property type="match status" value="1"/>
</dbReference>
<dbReference type="Gene3D" id="2.40.270.10">
    <property type="entry name" value="DNA-directed RNA polymerase, subunit 2, domain 6"/>
    <property type="match status" value="1"/>
</dbReference>
<dbReference type="Gene3D" id="3.90.1800.10">
    <property type="entry name" value="RNA polymerase alpha subunit dimerisation domain"/>
    <property type="match status" value="1"/>
</dbReference>
<dbReference type="Gene3D" id="3.90.1110.10">
    <property type="entry name" value="RNA polymerase Rpb2, domain 2"/>
    <property type="match status" value="2"/>
</dbReference>
<dbReference type="HAMAP" id="MF_01321">
    <property type="entry name" value="RNApol_bact_RpoB"/>
    <property type="match status" value="1"/>
</dbReference>
<dbReference type="InterPro" id="IPR042107">
    <property type="entry name" value="DNA-dir_RNA_pol_bsu_ext_1_sf"/>
</dbReference>
<dbReference type="InterPro" id="IPR019462">
    <property type="entry name" value="DNA-dir_RNA_pol_bsu_external_1"/>
</dbReference>
<dbReference type="InterPro" id="IPR015712">
    <property type="entry name" value="DNA-dir_RNA_pol_su2"/>
</dbReference>
<dbReference type="InterPro" id="IPR007120">
    <property type="entry name" value="DNA-dir_RNAP_su2_dom"/>
</dbReference>
<dbReference type="InterPro" id="IPR037033">
    <property type="entry name" value="DNA-dir_RNAP_su2_hyb_sf"/>
</dbReference>
<dbReference type="InterPro" id="IPR010243">
    <property type="entry name" value="RNA_pol_bsu_bac"/>
</dbReference>
<dbReference type="InterPro" id="IPR007121">
    <property type="entry name" value="RNA_pol_bsu_CS"/>
</dbReference>
<dbReference type="InterPro" id="IPR007644">
    <property type="entry name" value="RNA_pol_bsu_protrusion"/>
</dbReference>
<dbReference type="InterPro" id="IPR007642">
    <property type="entry name" value="RNA_pol_Rpb2_2"/>
</dbReference>
<dbReference type="InterPro" id="IPR037034">
    <property type="entry name" value="RNA_pol_Rpb2_2_sf"/>
</dbReference>
<dbReference type="InterPro" id="IPR007645">
    <property type="entry name" value="RNA_pol_Rpb2_3"/>
</dbReference>
<dbReference type="InterPro" id="IPR007641">
    <property type="entry name" value="RNA_pol_Rpb2_7"/>
</dbReference>
<dbReference type="InterPro" id="IPR014724">
    <property type="entry name" value="RNA_pol_RPB2_OB-fold"/>
</dbReference>
<dbReference type="NCBIfam" id="NF001616">
    <property type="entry name" value="PRK00405.1"/>
    <property type="match status" value="1"/>
</dbReference>
<dbReference type="NCBIfam" id="TIGR02013">
    <property type="entry name" value="rpoB"/>
    <property type="match status" value="1"/>
</dbReference>
<dbReference type="PANTHER" id="PTHR20856">
    <property type="entry name" value="DNA-DIRECTED RNA POLYMERASE I SUBUNIT 2"/>
    <property type="match status" value="1"/>
</dbReference>
<dbReference type="Pfam" id="PF04563">
    <property type="entry name" value="RNA_pol_Rpb2_1"/>
    <property type="match status" value="1"/>
</dbReference>
<dbReference type="Pfam" id="PF04561">
    <property type="entry name" value="RNA_pol_Rpb2_2"/>
    <property type="match status" value="1"/>
</dbReference>
<dbReference type="Pfam" id="PF04565">
    <property type="entry name" value="RNA_pol_Rpb2_3"/>
    <property type="match status" value="1"/>
</dbReference>
<dbReference type="Pfam" id="PF10385">
    <property type="entry name" value="RNA_pol_Rpb2_45"/>
    <property type="match status" value="1"/>
</dbReference>
<dbReference type="Pfam" id="PF00562">
    <property type="entry name" value="RNA_pol_Rpb2_6"/>
    <property type="match status" value="1"/>
</dbReference>
<dbReference type="Pfam" id="PF04560">
    <property type="entry name" value="RNA_pol_Rpb2_7"/>
    <property type="match status" value="1"/>
</dbReference>
<dbReference type="SUPFAM" id="SSF64484">
    <property type="entry name" value="beta and beta-prime subunits of DNA dependent RNA-polymerase"/>
    <property type="match status" value="1"/>
</dbReference>
<dbReference type="PROSITE" id="PS01166">
    <property type="entry name" value="RNA_POL_BETA"/>
    <property type="match status" value="1"/>
</dbReference>
<name>RPOB_MALP2</name>
<evidence type="ECO:0000255" key="1">
    <source>
        <dbReference type="HAMAP-Rule" id="MF_01321"/>
    </source>
</evidence>
<keyword id="KW-0240">DNA-directed RNA polymerase</keyword>
<keyword id="KW-0548">Nucleotidyltransferase</keyword>
<keyword id="KW-1185">Reference proteome</keyword>
<keyword id="KW-0804">Transcription</keyword>
<keyword id="KW-0808">Transferase</keyword>
<reference key="1">
    <citation type="journal article" date="2002" name="Nucleic Acids Res.">
        <title>The complete genomic sequence of Mycoplasma penetrans, an intracellular bacterial pathogen in humans.</title>
        <authorList>
            <person name="Sasaki Y."/>
            <person name="Ishikawa J."/>
            <person name="Yamashita A."/>
            <person name="Oshima K."/>
            <person name="Kenri T."/>
            <person name="Furuya K."/>
            <person name="Yoshino C."/>
            <person name="Horino A."/>
            <person name="Shiba T."/>
            <person name="Sasaki T."/>
            <person name="Hattori M."/>
        </authorList>
    </citation>
    <scope>NUCLEOTIDE SEQUENCE [LARGE SCALE GENOMIC DNA]</scope>
    <source>
        <strain>HF-2</strain>
    </source>
</reference>
<feature type="chain" id="PRO_0000047921" description="DNA-directed RNA polymerase subunit beta">
    <location>
        <begin position="1"/>
        <end position="1375"/>
    </location>
</feature>
<organism>
    <name type="scientific">Malacoplasma penetrans (strain HF-2)</name>
    <name type="common">Mycoplasma penetrans</name>
    <dbReference type="NCBI Taxonomy" id="272633"/>
    <lineage>
        <taxon>Bacteria</taxon>
        <taxon>Bacillati</taxon>
        <taxon>Mycoplasmatota</taxon>
        <taxon>Mycoplasmoidales</taxon>
        <taxon>Mycoplasmoidaceae</taxon>
        <taxon>Malacoplasma</taxon>
    </lineage>
</organism>
<accession>Q8EWX1</accession>
<comment type="function">
    <text evidence="1">DNA-dependent RNA polymerase catalyzes the transcription of DNA into RNA using the four ribonucleoside triphosphates as substrates.</text>
</comment>
<comment type="catalytic activity">
    <reaction evidence="1">
        <text>RNA(n) + a ribonucleoside 5'-triphosphate = RNA(n+1) + diphosphate</text>
        <dbReference type="Rhea" id="RHEA:21248"/>
        <dbReference type="Rhea" id="RHEA-COMP:14527"/>
        <dbReference type="Rhea" id="RHEA-COMP:17342"/>
        <dbReference type="ChEBI" id="CHEBI:33019"/>
        <dbReference type="ChEBI" id="CHEBI:61557"/>
        <dbReference type="ChEBI" id="CHEBI:140395"/>
        <dbReference type="EC" id="2.7.7.6"/>
    </reaction>
</comment>
<comment type="subunit">
    <text evidence="1">The RNAP catalytic core consists of 2 alpha, 1 beta, 1 beta' and 1 omega subunit. When a sigma factor is associated with the core the holoenzyme is formed, which can initiate transcription.</text>
</comment>
<comment type="similarity">
    <text evidence="1">Belongs to the RNA polymerase beta chain family.</text>
</comment>